<organismHost>
    <name type="scientific">Homo sapiens</name>
    <name type="common">Human</name>
    <dbReference type="NCBI Taxonomy" id="9606"/>
</organismHost>
<reference key="1">
    <citation type="journal article" date="1988" name="Virology">
        <title>Influenza B virus evolution: co-circulating lineages and comparison of evolutionary pattern with those of influenza A and C viruses.</title>
        <authorList>
            <person name="Yamashita M."/>
            <person name="Krystal M."/>
            <person name="Fitch W.M."/>
            <person name="Palese P."/>
        </authorList>
    </citation>
    <scope>NUCLEOTIDE SEQUENCE [GENOMIC RNA]</scope>
</reference>
<evidence type="ECO:0000250" key="1"/>
<evidence type="ECO:0000255" key="2"/>
<evidence type="ECO:0000305" key="3"/>
<gene>
    <name type="primary">HA</name>
</gene>
<proteinExistence type="inferred from homology"/>
<comment type="function">
    <text>Binds to sialic acid-containing receptors on the cell surface, bringing about the attachment of the virus particle to the cell. Plays a major role in the determination of host range restriction and virulence. Class I viral fusion protein. Responsible for penetration of the virus into the cell cytoplasm by mediating the fusion of the membrane of the endocytosed virus particle with the endosomal membrane. Low pH in endosomes induce an irreversible conformational change in HA2, releasing the fusion hydrophobic peptide. Several trimers are required to form a competent fusion pore.</text>
</comment>
<comment type="subunit">
    <text>Homotrimer of disulfide-linked HA1-HA2.</text>
</comment>
<comment type="subcellular location">
    <subcellularLocation>
        <location evidence="3">Virion membrane</location>
        <topology evidence="3">Single-pass type I membrane protein</topology>
    </subcellularLocation>
    <subcellularLocation>
        <location>Host apical cell membrane</location>
        <topology>Single-pass type I membrane protein</topology>
    </subcellularLocation>
    <text>Targeted to the apical plasma membrane in epithelial polarized cells through a signal present in the transmembrane domain. Associated with glycosphingolipid- and cholesterol-enriched detergent-resistant lipid rafts.</text>
</comment>
<comment type="PTM">
    <text evidence="1">In natural infection, inactive HA is matured into HA1 and HA2 outside the cell by one or more trypsin-like, arginine-specific endoprotease secreted by the bronchial epithelial cells. One identified protease that may be involved in this process is secreted in lungs by club cells (By similarity).</text>
</comment>
<comment type="PTM">
    <text evidence="1">Palmitoylated.</text>
</comment>
<comment type="miscellaneous">
    <text>Major glycoprotein, comprises over 80% of the envelope proteins present in virus particle.</text>
</comment>
<comment type="miscellaneous">
    <text>The extent of infection into host organism is determined by HA. Influenza viruses bud from the apical surface of polarized epithelial cells (e.g. bronchial epithelial cells) into lumen of lungs and are therefore usually pneumotropic. The reason is that HA is cleaved by tryptase clara which is restricted to lungs. However, HAs of H5 and H7 pantropic avian viruses subtypes can be cleaved by furin and subtilisin-type enzymes, allowing the virus to grow in other organs than lungs.</text>
</comment>
<comment type="miscellaneous">
    <text>The influenza B genome consist of 8 RNA segments. Genetic variation of hemagglutinin and/or neuraminidase genes results in the emergence of new influenza strains. The mechanism of variation can be the result of point mutations or the result of genetic reassortment between segments of two different strains.</text>
</comment>
<comment type="similarity">
    <text evidence="3">Belongs to the influenza viruses hemagglutinin family.</text>
</comment>
<accession>P12442</accession>
<sequence length="363" mass="39123">IVLLMVVTSNADRICTGITSSNSPHVVKTATQGEVNVTGVIPLTTTPTKSHFANLKGTQTRGKLCPNCLNCTDLDVALGRPKCMGTIPSAKVSILHEAKPVTSGCFPIMHDRTKIRQLPNLLRGYENIRLSTSDVINAETAPGGPYTVGTSGSCPNITNGEGFFETMAWAIPKNKTAMNPLTVEVPYICTKGEDQITVWGFHSDNETQMVILYGDSKPQKFTSSANGVTTHYVSQIGGFPNQTEDEGLKQSGRIVVDYIVQKPGKTGTIVYQRGVLLPQKVWCASGRSKVIKGSLPLIGEADCLHEKYGGLNKSKPYYTGEHAKAIGNCPIWVKTPLKLANGTKYRPPAKLLKERGFFGAIAG</sequence>
<feature type="signal peptide">
    <location>
        <begin position="1" status="less than"/>
        <end position="11"/>
    </location>
</feature>
<feature type="chain" id="PRO_0000039104" description="Hemagglutinin HA1 chain">
    <location>
        <begin position="12"/>
        <end position="354"/>
    </location>
</feature>
<feature type="chain" id="PRO_0000039105" description="Hemagglutinin HA2 chain">
    <location>
        <begin position="356"/>
        <end position="363" status="greater than"/>
    </location>
</feature>
<feature type="glycosylation site" description="N-linked (GlcNAc...) asparagine; by host" evidence="2">
    <location>
        <position position="36"/>
    </location>
</feature>
<feature type="glycosylation site" description="N-linked (GlcNAc...) asparagine; by host" evidence="2">
    <location>
        <position position="70"/>
    </location>
</feature>
<feature type="glycosylation site" description="N-linked (GlcNAc...) asparagine; by host" evidence="2">
    <location>
        <position position="156"/>
    </location>
</feature>
<feature type="glycosylation site" description="N-linked (GlcNAc...) asparagine; by host" evidence="2">
    <location>
        <position position="174"/>
    </location>
</feature>
<feature type="glycosylation site" description="N-linked (GlcNAc...) asparagine; by host" evidence="2">
    <location>
        <position position="205"/>
    </location>
</feature>
<feature type="glycosylation site" description="N-linked (GlcNAc...) asparagine; by host" evidence="2">
    <location>
        <position position="241"/>
    </location>
</feature>
<feature type="glycosylation site" description="N-linked (GlcNAc...) asparagine; by host" evidence="2">
    <location>
        <position position="312"/>
    </location>
</feature>
<feature type="glycosylation site" description="N-linked (GlcNAc...) asparagine; by host" evidence="2">
    <location>
        <position position="341"/>
    </location>
</feature>
<feature type="non-terminal residue">
    <location>
        <position position="1"/>
    </location>
</feature>
<feature type="non-terminal residue">
    <location>
        <position position="363"/>
    </location>
</feature>
<keyword id="KW-1015">Disulfide bond</keyword>
<keyword id="KW-1170">Fusion of virus membrane with host endosomal membrane</keyword>
<keyword id="KW-1168">Fusion of virus membrane with host membrane</keyword>
<keyword id="KW-0325">Glycoprotein</keyword>
<keyword id="KW-0348">Hemagglutinin</keyword>
<keyword id="KW-1032">Host cell membrane</keyword>
<keyword id="KW-1043">Host membrane</keyword>
<keyword id="KW-0945">Host-virus interaction</keyword>
<keyword id="KW-0449">Lipoprotein</keyword>
<keyword id="KW-0472">Membrane</keyword>
<keyword id="KW-0564">Palmitate</keyword>
<keyword id="KW-0732">Signal</keyword>
<keyword id="KW-0812">Transmembrane</keyword>
<keyword id="KW-1161">Viral attachment to host cell</keyword>
<keyword id="KW-0261">Viral envelope protein</keyword>
<keyword id="KW-1162">Viral penetration into host cytoplasm</keyword>
<keyword id="KW-0946">Virion</keyword>
<keyword id="KW-1160">Virus entry into host cell</keyword>
<name>HEMA_INBGL</name>
<dbReference type="EMBL" id="M22947">
    <property type="protein sequence ID" value="AAA43694.1"/>
    <property type="molecule type" value="Genomic_RNA"/>
</dbReference>
<dbReference type="SMR" id="P12442"/>
<dbReference type="GlyCosmos" id="P12442">
    <property type="glycosylation" value="8 sites, No reported glycans"/>
</dbReference>
<dbReference type="GO" id="GO:0020002">
    <property type="term" value="C:host cell plasma membrane"/>
    <property type="evidence" value="ECO:0007669"/>
    <property type="project" value="UniProtKB-SubCell"/>
</dbReference>
<dbReference type="GO" id="GO:0016020">
    <property type="term" value="C:membrane"/>
    <property type="evidence" value="ECO:0007669"/>
    <property type="project" value="UniProtKB-KW"/>
</dbReference>
<dbReference type="GO" id="GO:0019031">
    <property type="term" value="C:viral envelope"/>
    <property type="evidence" value="ECO:0007669"/>
    <property type="project" value="UniProtKB-KW"/>
</dbReference>
<dbReference type="GO" id="GO:0055036">
    <property type="term" value="C:virion membrane"/>
    <property type="evidence" value="ECO:0007669"/>
    <property type="project" value="UniProtKB-SubCell"/>
</dbReference>
<dbReference type="GO" id="GO:0046789">
    <property type="term" value="F:host cell surface receptor binding"/>
    <property type="evidence" value="ECO:0007669"/>
    <property type="project" value="InterPro"/>
</dbReference>
<dbReference type="GO" id="GO:0039654">
    <property type="term" value="P:fusion of virus membrane with host endosome membrane"/>
    <property type="evidence" value="ECO:0007669"/>
    <property type="project" value="UniProtKB-KW"/>
</dbReference>
<dbReference type="GO" id="GO:0019064">
    <property type="term" value="P:fusion of virus membrane with host plasma membrane"/>
    <property type="evidence" value="ECO:0007669"/>
    <property type="project" value="InterPro"/>
</dbReference>
<dbReference type="GO" id="GO:0046718">
    <property type="term" value="P:symbiont entry into host cell"/>
    <property type="evidence" value="ECO:0007669"/>
    <property type="project" value="UniProtKB-KW"/>
</dbReference>
<dbReference type="GO" id="GO:0019062">
    <property type="term" value="P:virion attachment to host cell"/>
    <property type="evidence" value="ECO:0007669"/>
    <property type="project" value="UniProtKB-KW"/>
</dbReference>
<dbReference type="Gene3D" id="3.90.209.20">
    <property type="match status" value="1"/>
</dbReference>
<dbReference type="Gene3D" id="2.10.77.10">
    <property type="entry name" value="Hemagglutinin Chain A, Domain 2"/>
    <property type="match status" value="1"/>
</dbReference>
<dbReference type="InterPro" id="IPR008980">
    <property type="entry name" value="Capsid_hemagglutn"/>
</dbReference>
<dbReference type="InterPro" id="IPR013828">
    <property type="entry name" value="Hemagglutn_HA1_a/b_dom_sf"/>
</dbReference>
<dbReference type="InterPro" id="IPR001364">
    <property type="entry name" value="Hemagglutn_influenz_A/B"/>
</dbReference>
<dbReference type="Pfam" id="PF00509">
    <property type="entry name" value="Hemagglutinin"/>
    <property type="match status" value="1"/>
</dbReference>
<dbReference type="SUPFAM" id="SSF49818">
    <property type="entry name" value="Viral protein domain"/>
    <property type="match status" value="1"/>
</dbReference>
<protein>
    <recommendedName>
        <fullName>Hemagglutinin</fullName>
    </recommendedName>
    <component>
        <recommendedName>
            <fullName>Hemagglutinin HA1 chain</fullName>
        </recommendedName>
    </component>
    <component>
        <recommendedName>
            <fullName>Hemagglutinin HA2 chain</fullName>
        </recommendedName>
    </component>
</protein>
<organism>
    <name type="scientific">Influenza B virus (strain B/GL/1954)</name>
    <dbReference type="NCBI Taxonomy" id="11530"/>
    <lineage>
        <taxon>Viruses</taxon>
        <taxon>Riboviria</taxon>
        <taxon>Orthornavirae</taxon>
        <taxon>Negarnaviricota</taxon>
        <taxon>Polyploviricotina</taxon>
        <taxon>Insthoviricetes</taxon>
        <taxon>Articulavirales</taxon>
        <taxon>Orthomyxoviridae</taxon>
        <taxon>Betainfluenzavirus</taxon>
        <taxon>Betainfluenzavirus influenzae</taxon>
        <taxon>Influenza B virus</taxon>
    </lineage>
</organism>